<protein>
    <recommendedName>
        <fullName evidence="1">ATP synthase gamma chain</fullName>
    </recommendedName>
    <alternativeName>
        <fullName evidence="1">ATP synthase F1 sector gamma subunit</fullName>
    </alternativeName>
    <alternativeName>
        <fullName evidence="1">F-ATPase gamma subunit</fullName>
    </alternativeName>
</protein>
<name>ATPG_CHLT3</name>
<organism>
    <name type="scientific">Chloroherpeton thalassium (strain ATCC 35110 / GB-78)</name>
    <dbReference type="NCBI Taxonomy" id="517418"/>
    <lineage>
        <taxon>Bacteria</taxon>
        <taxon>Pseudomonadati</taxon>
        <taxon>Chlorobiota</taxon>
        <taxon>Chlorobiia</taxon>
        <taxon>Chlorobiales</taxon>
        <taxon>Chloroherpetonaceae</taxon>
        <taxon>Chloroherpeton</taxon>
    </lineage>
</organism>
<evidence type="ECO:0000255" key="1">
    <source>
        <dbReference type="HAMAP-Rule" id="MF_00815"/>
    </source>
</evidence>
<feature type="chain" id="PRO_1000134125" description="ATP synthase gamma chain">
    <location>
        <begin position="1"/>
        <end position="304"/>
    </location>
</feature>
<accession>B3QWX8</accession>
<sequence>MATLREIRTRIKSVKSTQQLTKAMKMVAAAKLRRAQDRALQARPYAAKLKELLDSLSGKVDTTINPLLTPRSEVKNVLVILVTSDRGLCGAFNTNIIKMAQRLIDQDYADMSRQGRVKMICAGRRGNDFFRKRGYNVVYGYPNIFNQLDFNAAKEIVEKATELYLSGEVDKVHVIYNEFKNVVSPNLISEVFLPIAPSKKDDAGSDAARQNKLVPIVDYIYEPSPEAIINELVPKHLNTQLWRVLLESNAAEQASRMTAMDSATDNAKELLRSLSITYNRARQAAITKEILEIVGGANALEQSA</sequence>
<proteinExistence type="inferred from homology"/>
<reference key="1">
    <citation type="submission" date="2008-06" db="EMBL/GenBank/DDBJ databases">
        <title>Complete sequence of Chloroherpeton thalassium ATCC 35110.</title>
        <authorList>
            <consortium name="US DOE Joint Genome Institute"/>
            <person name="Lucas S."/>
            <person name="Copeland A."/>
            <person name="Lapidus A."/>
            <person name="Glavina del Rio T."/>
            <person name="Dalin E."/>
            <person name="Tice H."/>
            <person name="Bruce D."/>
            <person name="Goodwin L."/>
            <person name="Pitluck S."/>
            <person name="Schmutz J."/>
            <person name="Larimer F."/>
            <person name="Land M."/>
            <person name="Hauser L."/>
            <person name="Kyrpides N."/>
            <person name="Mikhailova N."/>
            <person name="Liu Z."/>
            <person name="Li T."/>
            <person name="Zhao F."/>
            <person name="Overmann J."/>
            <person name="Bryant D.A."/>
            <person name="Richardson P."/>
        </authorList>
    </citation>
    <scope>NUCLEOTIDE SEQUENCE [LARGE SCALE GENOMIC DNA]</scope>
    <source>
        <strain>ATCC 35110 / GB-78</strain>
    </source>
</reference>
<dbReference type="EMBL" id="CP001100">
    <property type="protein sequence ID" value="ACF13342.1"/>
    <property type="molecule type" value="Genomic_DNA"/>
</dbReference>
<dbReference type="RefSeq" id="WP_012499426.1">
    <property type="nucleotide sequence ID" value="NC_011026.1"/>
</dbReference>
<dbReference type="SMR" id="B3QWX8"/>
<dbReference type="STRING" id="517418.Ctha_0874"/>
<dbReference type="KEGG" id="cts:Ctha_0874"/>
<dbReference type="eggNOG" id="COG0224">
    <property type="taxonomic scope" value="Bacteria"/>
</dbReference>
<dbReference type="HOGENOM" id="CLU_050669_0_1_10"/>
<dbReference type="OrthoDB" id="9812769at2"/>
<dbReference type="Proteomes" id="UP000001208">
    <property type="component" value="Chromosome"/>
</dbReference>
<dbReference type="GO" id="GO:0005886">
    <property type="term" value="C:plasma membrane"/>
    <property type="evidence" value="ECO:0007669"/>
    <property type="project" value="UniProtKB-SubCell"/>
</dbReference>
<dbReference type="GO" id="GO:0045259">
    <property type="term" value="C:proton-transporting ATP synthase complex"/>
    <property type="evidence" value="ECO:0007669"/>
    <property type="project" value="UniProtKB-KW"/>
</dbReference>
<dbReference type="GO" id="GO:0005524">
    <property type="term" value="F:ATP binding"/>
    <property type="evidence" value="ECO:0007669"/>
    <property type="project" value="UniProtKB-UniRule"/>
</dbReference>
<dbReference type="GO" id="GO:0046933">
    <property type="term" value="F:proton-transporting ATP synthase activity, rotational mechanism"/>
    <property type="evidence" value="ECO:0007669"/>
    <property type="project" value="UniProtKB-UniRule"/>
</dbReference>
<dbReference type="GO" id="GO:0042777">
    <property type="term" value="P:proton motive force-driven plasma membrane ATP synthesis"/>
    <property type="evidence" value="ECO:0007669"/>
    <property type="project" value="UniProtKB-UniRule"/>
</dbReference>
<dbReference type="CDD" id="cd12151">
    <property type="entry name" value="F1-ATPase_gamma"/>
    <property type="match status" value="1"/>
</dbReference>
<dbReference type="FunFam" id="1.10.287.80:FF:000003">
    <property type="entry name" value="ATP synthase gamma chain, chloroplastic"/>
    <property type="match status" value="1"/>
</dbReference>
<dbReference type="Gene3D" id="3.40.1380.10">
    <property type="match status" value="1"/>
</dbReference>
<dbReference type="Gene3D" id="1.10.287.80">
    <property type="entry name" value="ATP synthase, gamma subunit, helix hairpin domain"/>
    <property type="match status" value="2"/>
</dbReference>
<dbReference type="HAMAP" id="MF_00815">
    <property type="entry name" value="ATP_synth_gamma_bact"/>
    <property type="match status" value="1"/>
</dbReference>
<dbReference type="InterPro" id="IPR035968">
    <property type="entry name" value="ATP_synth_F1_ATPase_gsu"/>
</dbReference>
<dbReference type="InterPro" id="IPR000131">
    <property type="entry name" value="ATP_synth_F1_gsu"/>
</dbReference>
<dbReference type="InterPro" id="IPR023632">
    <property type="entry name" value="ATP_synth_F1_gsu_CS"/>
</dbReference>
<dbReference type="NCBIfam" id="TIGR01146">
    <property type="entry name" value="ATPsyn_F1gamma"/>
    <property type="match status" value="1"/>
</dbReference>
<dbReference type="NCBIfam" id="NF009958">
    <property type="entry name" value="PRK13425.1"/>
    <property type="match status" value="1"/>
</dbReference>
<dbReference type="PANTHER" id="PTHR11693">
    <property type="entry name" value="ATP SYNTHASE GAMMA CHAIN"/>
    <property type="match status" value="1"/>
</dbReference>
<dbReference type="PANTHER" id="PTHR11693:SF22">
    <property type="entry name" value="ATP SYNTHASE SUBUNIT GAMMA, MITOCHONDRIAL"/>
    <property type="match status" value="1"/>
</dbReference>
<dbReference type="Pfam" id="PF00231">
    <property type="entry name" value="ATP-synt"/>
    <property type="match status" value="1"/>
</dbReference>
<dbReference type="PRINTS" id="PR00126">
    <property type="entry name" value="ATPASEGAMMA"/>
</dbReference>
<dbReference type="SUPFAM" id="SSF52943">
    <property type="entry name" value="ATP synthase (F1-ATPase), gamma subunit"/>
    <property type="match status" value="1"/>
</dbReference>
<dbReference type="PROSITE" id="PS00153">
    <property type="entry name" value="ATPASE_GAMMA"/>
    <property type="match status" value="1"/>
</dbReference>
<comment type="function">
    <text evidence="1">Produces ATP from ADP in the presence of a proton gradient across the membrane. The gamma chain is believed to be important in regulating ATPase activity and the flow of protons through the CF(0) complex.</text>
</comment>
<comment type="subunit">
    <text evidence="1">F-type ATPases have 2 components, CF(1) - the catalytic core - and CF(0) - the membrane proton channel. CF(1) has five subunits: alpha(3), beta(3), gamma(1), delta(1), epsilon(1). CF(0) has three main subunits: a, b and c.</text>
</comment>
<comment type="subcellular location">
    <subcellularLocation>
        <location evidence="1">Cell membrane</location>
        <topology evidence="1">Peripheral membrane protein</topology>
    </subcellularLocation>
</comment>
<comment type="similarity">
    <text evidence="1">Belongs to the ATPase gamma chain family.</text>
</comment>
<gene>
    <name evidence="1" type="primary">atpG</name>
    <name type="ordered locus">Ctha_0874</name>
</gene>
<keyword id="KW-0066">ATP synthesis</keyword>
<keyword id="KW-1003">Cell membrane</keyword>
<keyword id="KW-0139">CF(1)</keyword>
<keyword id="KW-0375">Hydrogen ion transport</keyword>
<keyword id="KW-0406">Ion transport</keyword>
<keyword id="KW-0472">Membrane</keyword>
<keyword id="KW-1185">Reference proteome</keyword>
<keyword id="KW-0813">Transport</keyword>